<protein>
    <recommendedName>
        <fullName evidence="1">Undecaprenyl-diphosphatase</fullName>
        <ecNumber evidence="1">3.6.1.27</ecNumber>
    </recommendedName>
    <alternativeName>
        <fullName evidence="1">Bacitracin resistance protein</fullName>
    </alternativeName>
    <alternativeName>
        <fullName evidence="1">Undecaprenyl pyrophosphate phosphatase</fullName>
    </alternativeName>
</protein>
<gene>
    <name evidence="1" type="primary">uppP</name>
    <name type="synonym">bacA</name>
    <name type="synonym">upk</name>
    <name type="ordered locus">XAC0203</name>
</gene>
<evidence type="ECO:0000255" key="1">
    <source>
        <dbReference type="HAMAP-Rule" id="MF_01006"/>
    </source>
</evidence>
<proteinExistence type="inferred from homology"/>
<accession>Q8PQW6</accession>
<sequence>MSDLISALLLGILEGLTEFLPISSTGHLLIAEQWLGRRSDFFNIVIQAGAILAICLALRQRLWSLATGLGERANRDYVLKVGVAFLVTAVVGLIVRKAGWQLPETLQPVAWALLIGGVWMLVAEHFAGKLPERDVVTWKVAIAVGLAQVVAGVFPGTSRSASTIFIAMLLGLSKRSAAADFVFMVGIPTMFAASGYALLEMYKEGGFGTENWADVAVAFVAATITGFVVVKWLLGYIKKHRFTVFAVYRMLLGAALLLWLPAAAG</sequence>
<keyword id="KW-0046">Antibiotic resistance</keyword>
<keyword id="KW-0997">Cell inner membrane</keyword>
<keyword id="KW-1003">Cell membrane</keyword>
<keyword id="KW-0133">Cell shape</keyword>
<keyword id="KW-0961">Cell wall biogenesis/degradation</keyword>
<keyword id="KW-0378">Hydrolase</keyword>
<keyword id="KW-0472">Membrane</keyword>
<keyword id="KW-0573">Peptidoglycan synthesis</keyword>
<keyword id="KW-0812">Transmembrane</keyword>
<keyword id="KW-1133">Transmembrane helix</keyword>
<comment type="function">
    <text evidence="1">Catalyzes the dephosphorylation of undecaprenyl diphosphate (UPP). Confers resistance to bacitracin.</text>
</comment>
<comment type="catalytic activity">
    <reaction evidence="1">
        <text>di-trans,octa-cis-undecaprenyl diphosphate + H2O = di-trans,octa-cis-undecaprenyl phosphate + phosphate + H(+)</text>
        <dbReference type="Rhea" id="RHEA:28094"/>
        <dbReference type="ChEBI" id="CHEBI:15377"/>
        <dbReference type="ChEBI" id="CHEBI:15378"/>
        <dbReference type="ChEBI" id="CHEBI:43474"/>
        <dbReference type="ChEBI" id="CHEBI:58405"/>
        <dbReference type="ChEBI" id="CHEBI:60392"/>
        <dbReference type="EC" id="3.6.1.27"/>
    </reaction>
</comment>
<comment type="subcellular location">
    <subcellularLocation>
        <location evidence="1">Cell inner membrane</location>
        <topology evidence="1">Multi-pass membrane protein</topology>
    </subcellularLocation>
</comment>
<comment type="miscellaneous">
    <text>Bacitracin is thought to be involved in the inhibition of peptidoglycan synthesis by sequestering undecaprenyl diphosphate, thereby reducing the pool of lipid carrier available.</text>
</comment>
<comment type="similarity">
    <text evidence="1">Belongs to the UppP family.</text>
</comment>
<reference key="1">
    <citation type="journal article" date="2002" name="Nature">
        <title>Comparison of the genomes of two Xanthomonas pathogens with differing host specificities.</title>
        <authorList>
            <person name="da Silva A.C.R."/>
            <person name="Ferro J.A."/>
            <person name="Reinach F.C."/>
            <person name="Farah C.S."/>
            <person name="Furlan L.R."/>
            <person name="Quaggio R.B."/>
            <person name="Monteiro-Vitorello C.B."/>
            <person name="Van Sluys M.A."/>
            <person name="Almeida N.F. Jr."/>
            <person name="Alves L.M.C."/>
            <person name="do Amaral A.M."/>
            <person name="Bertolini M.C."/>
            <person name="Camargo L.E.A."/>
            <person name="Camarotte G."/>
            <person name="Cannavan F."/>
            <person name="Cardozo J."/>
            <person name="Chambergo F."/>
            <person name="Ciapina L.P."/>
            <person name="Cicarelli R.M.B."/>
            <person name="Coutinho L.L."/>
            <person name="Cursino-Santos J.R."/>
            <person name="El-Dorry H."/>
            <person name="Faria J.B."/>
            <person name="Ferreira A.J.S."/>
            <person name="Ferreira R.C.C."/>
            <person name="Ferro M.I.T."/>
            <person name="Formighieri E.F."/>
            <person name="Franco M.C."/>
            <person name="Greggio C.C."/>
            <person name="Gruber A."/>
            <person name="Katsuyama A.M."/>
            <person name="Kishi L.T."/>
            <person name="Leite R.P."/>
            <person name="Lemos E.G.M."/>
            <person name="Lemos M.V.F."/>
            <person name="Locali E.C."/>
            <person name="Machado M.A."/>
            <person name="Madeira A.M.B.N."/>
            <person name="Martinez-Rossi N.M."/>
            <person name="Martins E.C."/>
            <person name="Meidanis J."/>
            <person name="Menck C.F.M."/>
            <person name="Miyaki C.Y."/>
            <person name="Moon D.H."/>
            <person name="Moreira L.M."/>
            <person name="Novo M.T.M."/>
            <person name="Okura V.K."/>
            <person name="Oliveira M.C."/>
            <person name="Oliveira V.R."/>
            <person name="Pereira H.A."/>
            <person name="Rossi A."/>
            <person name="Sena J.A.D."/>
            <person name="Silva C."/>
            <person name="de Souza R.F."/>
            <person name="Spinola L.A.F."/>
            <person name="Takita M.A."/>
            <person name="Tamura R.E."/>
            <person name="Teixeira E.C."/>
            <person name="Tezza R.I.D."/>
            <person name="Trindade dos Santos M."/>
            <person name="Truffi D."/>
            <person name="Tsai S.M."/>
            <person name="White F.F."/>
            <person name="Setubal J.C."/>
            <person name="Kitajima J.P."/>
        </authorList>
    </citation>
    <scope>NUCLEOTIDE SEQUENCE [LARGE SCALE GENOMIC DNA]</scope>
    <source>
        <strain>306</strain>
    </source>
</reference>
<dbReference type="EC" id="3.6.1.27" evidence="1"/>
<dbReference type="EMBL" id="AE008923">
    <property type="protein sequence ID" value="AAM35095.1"/>
    <property type="molecule type" value="Genomic_DNA"/>
</dbReference>
<dbReference type="RefSeq" id="WP_003488476.1">
    <property type="nucleotide sequence ID" value="NC_003919.1"/>
</dbReference>
<dbReference type="SMR" id="Q8PQW6"/>
<dbReference type="KEGG" id="xac:XAC0203"/>
<dbReference type="eggNOG" id="COG1968">
    <property type="taxonomic scope" value="Bacteria"/>
</dbReference>
<dbReference type="HOGENOM" id="CLU_060296_2_0_6"/>
<dbReference type="Proteomes" id="UP000000576">
    <property type="component" value="Chromosome"/>
</dbReference>
<dbReference type="GO" id="GO:0005886">
    <property type="term" value="C:plasma membrane"/>
    <property type="evidence" value="ECO:0007669"/>
    <property type="project" value="UniProtKB-SubCell"/>
</dbReference>
<dbReference type="GO" id="GO:0050380">
    <property type="term" value="F:undecaprenyl-diphosphatase activity"/>
    <property type="evidence" value="ECO:0007669"/>
    <property type="project" value="UniProtKB-UniRule"/>
</dbReference>
<dbReference type="GO" id="GO:0071555">
    <property type="term" value="P:cell wall organization"/>
    <property type="evidence" value="ECO:0007669"/>
    <property type="project" value="UniProtKB-KW"/>
</dbReference>
<dbReference type="GO" id="GO:0009252">
    <property type="term" value="P:peptidoglycan biosynthetic process"/>
    <property type="evidence" value="ECO:0007669"/>
    <property type="project" value="UniProtKB-KW"/>
</dbReference>
<dbReference type="GO" id="GO:0008360">
    <property type="term" value="P:regulation of cell shape"/>
    <property type="evidence" value="ECO:0007669"/>
    <property type="project" value="UniProtKB-KW"/>
</dbReference>
<dbReference type="GO" id="GO:0046677">
    <property type="term" value="P:response to antibiotic"/>
    <property type="evidence" value="ECO:0007669"/>
    <property type="project" value="UniProtKB-UniRule"/>
</dbReference>
<dbReference type="HAMAP" id="MF_01006">
    <property type="entry name" value="Undec_diphosphatase"/>
    <property type="match status" value="1"/>
</dbReference>
<dbReference type="InterPro" id="IPR003824">
    <property type="entry name" value="UppP"/>
</dbReference>
<dbReference type="NCBIfam" id="NF001390">
    <property type="entry name" value="PRK00281.1-4"/>
    <property type="match status" value="1"/>
</dbReference>
<dbReference type="PANTHER" id="PTHR30622">
    <property type="entry name" value="UNDECAPRENYL-DIPHOSPHATASE"/>
    <property type="match status" value="1"/>
</dbReference>
<dbReference type="PANTHER" id="PTHR30622:SF3">
    <property type="entry name" value="UNDECAPRENYL-DIPHOSPHATASE"/>
    <property type="match status" value="1"/>
</dbReference>
<dbReference type="Pfam" id="PF02673">
    <property type="entry name" value="BacA"/>
    <property type="match status" value="1"/>
</dbReference>
<name>UPPP_XANAC</name>
<organism>
    <name type="scientific">Xanthomonas axonopodis pv. citri (strain 306)</name>
    <dbReference type="NCBI Taxonomy" id="190486"/>
    <lineage>
        <taxon>Bacteria</taxon>
        <taxon>Pseudomonadati</taxon>
        <taxon>Pseudomonadota</taxon>
        <taxon>Gammaproteobacteria</taxon>
        <taxon>Lysobacterales</taxon>
        <taxon>Lysobacteraceae</taxon>
        <taxon>Xanthomonas</taxon>
    </lineage>
</organism>
<feature type="chain" id="PRO_0000151241" description="Undecaprenyl-diphosphatase">
    <location>
        <begin position="1"/>
        <end position="265"/>
    </location>
</feature>
<feature type="transmembrane region" description="Helical" evidence="1">
    <location>
        <begin position="38"/>
        <end position="58"/>
    </location>
</feature>
<feature type="transmembrane region" description="Helical" evidence="1">
    <location>
        <begin position="75"/>
        <end position="95"/>
    </location>
</feature>
<feature type="transmembrane region" description="Helical" evidence="1">
    <location>
        <begin position="108"/>
        <end position="128"/>
    </location>
</feature>
<feature type="transmembrane region" description="Helical" evidence="1">
    <location>
        <begin position="135"/>
        <end position="155"/>
    </location>
</feature>
<feature type="transmembrane region" description="Helical" evidence="1">
    <location>
        <begin position="181"/>
        <end position="201"/>
    </location>
</feature>
<feature type="transmembrane region" description="Helical" evidence="1">
    <location>
        <begin position="215"/>
        <end position="235"/>
    </location>
</feature>
<feature type="transmembrane region" description="Helical" evidence="1">
    <location>
        <begin position="244"/>
        <end position="264"/>
    </location>
</feature>